<protein>
    <recommendedName>
        <fullName>Putative uncharacterized protein DDB_G0288043</fullName>
    </recommendedName>
</protein>
<reference key="1">
    <citation type="journal article" date="2005" name="Nature">
        <title>The genome of the social amoeba Dictyostelium discoideum.</title>
        <authorList>
            <person name="Eichinger L."/>
            <person name="Pachebat J.A."/>
            <person name="Gloeckner G."/>
            <person name="Rajandream M.A."/>
            <person name="Sucgang R."/>
            <person name="Berriman M."/>
            <person name="Song J."/>
            <person name="Olsen R."/>
            <person name="Szafranski K."/>
            <person name="Xu Q."/>
            <person name="Tunggal B."/>
            <person name="Kummerfeld S."/>
            <person name="Madera M."/>
            <person name="Konfortov B.A."/>
            <person name="Rivero F."/>
            <person name="Bankier A.T."/>
            <person name="Lehmann R."/>
            <person name="Hamlin N."/>
            <person name="Davies R."/>
            <person name="Gaudet P."/>
            <person name="Fey P."/>
            <person name="Pilcher K."/>
            <person name="Chen G."/>
            <person name="Saunders D."/>
            <person name="Sodergren E.J."/>
            <person name="Davis P."/>
            <person name="Kerhornou A."/>
            <person name="Nie X."/>
            <person name="Hall N."/>
            <person name="Anjard C."/>
            <person name="Hemphill L."/>
            <person name="Bason N."/>
            <person name="Farbrother P."/>
            <person name="Desany B."/>
            <person name="Just E."/>
            <person name="Morio T."/>
            <person name="Rost R."/>
            <person name="Churcher C.M."/>
            <person name="Cooper J."/>
            <person name="Haydock S."/>
            <person name="van Driessche N."/>
            <person name="Cronin A."/>
            <person name="Goodhead I."/>
            <person name="Muzny D.M."/>
            <person name="Mourier T."/>
            <person name="Pain A."/>
            <person name="Lu M."/>
            <person name="Harper D."/>
            <person name="Lindsay R."/>
            <person name="Hauser H."/>
            <person name="James K.D."/>
            <person name="Quiles M."/>
            <person name="Madan Babu M."/>
            <person name="Saito T."/>
            <person name="Buchrieser C."/>
            <person name="Wardroper A."/>
            <person name="Felder M."/>
            <person name="Thangavelu M."/>
            <person name="Johnson D."/>
            <person name="Knights A."/>
            <person name="Loulseged H."/>
            <person name="Mungall K.L."/>
            <person name="Oliver K."/>
            <person name="Price C."/>
            <person name="Quail M.A."/>
            <person name="Urushihara H."/>
            <person name="Hernandez J."/>
            <person name="Rabbinowitsch E."/>
            <person name="Steffen D."/>
            <person name="Sanders M."/>
            <person name="Ma J."/>
            <person name="Kohara Y."/>
            <person name="Sharp S."/>
            <person name="Simmonds M.N."/>
            <person name="Spiegler S."/>
            <person name="Tivey A."/>
            <person name="Sugano S."/>
            <person name="White B."/>
            <person name="Walker D."/>
            <person name="Woodward J.R."/>
            <person name="Winckler T."/>
            <person name="Tanaka Y."/>
            <person name="Shaulsky G."/>
            <person name="Schleicher M."/>
            <person name="Weinstock G.M."/>
            <person name="Rosenthal A."/>
            <person name="Cox E.C."/>
            <person name="Chisholm R.L."/>
            <person name="Gibbs R.A."/>
            <person name="Loomis W.F."/>
            <person name="Platzer M."/>
            <person name="Kay R.R."/>
            <person name="Williams J.G."/>
            <person name="Dear P.H."/>
            <person name="Noegel A.A."/>
            <person name="Barrell B.G."/>
            <person name="Kuspa A."/>
        </authorList>
    </citation>
    <scope>NUCLEOTIDE SEQUENCE [LARGE SCALE GENOMIC DNA]</scope>
    <source>
        <strain>AX4</strain>
    </source>
</reference>
<sequence>MNLNFKVPTWDFIMTDPSSPKLCGQKGSSKNGSPKTSSPKSGSPRACSPKLKHKNNQQLLQNDSINLSSSPSSPSSPSSPPMVGKVTVKKTHTKSSVVPSNSNGNNSPVLKVSQYQVPQNGSSPVLSPVSLIPIQDLNSPNVGYKLELEQRLHKRQLQKRLEKQIQDSEKEKQDQLLIQQQQIQQQQQQIQQQQQQIQLLLNNQNNQNQNQNQNQNQIQNNNIKNGMKLVSIPTPHPNFNNINNINNNNNNNNNNNNSYNGNIETNTPISLPPPICNKYKNNYPSCDVLFKSSLSSSSSASPFSLTPTSQSPILSSPLFHNVPSVESHFINNDSFLQLPPIRDEIF</sequence>
<evidence type="ECO:0000256" key="1">
    <source>
        <dbReference type="SAM" id="MobiDB-lite"/>
    </source>
</evidence>
<keyword id="KW-1185">Reference proteome</keyword>
<gene>
    <name type="ORF">DDB_G0288043</name>
</gene>
<feature type="chain" id="PRO_0000346998" description="Putative uncharacterized protein DDB_G0288043">
    <location>
        <begin position="1"/>
        <end position="346"/>
    </location>
</feature>
<feature type="region of interest" description="Disordered" evidence="1">
    <location>
        <begin position="10"/>
        <end position="109"/>
    </location>
</feature>
<feature type="compositionally biased region" description="Low complexity" evidence="1">
    <location>
        <begin position="26"/>
        <end position="44"/>
    </location>
</feature>
<feature type="compositionally biased region" description="Polar residues" evidence="1">
    <location>
        <begin position="56"/>
        <end position="67"/>
    </location>
</feature>
<feature type="compositionally biased region" description="Low complexity" evidence="1">
    <location>
        <begin position="94"/>
        <end position="109"/>
    </location>
</feature>
<organism>
    <name type="scientific">Dictyostelium discoideum</name>
    <name type="common">Social amoeba</name>
    <dbReference type="NCBI Taxonomy" id="44689"/>
    <lineage>
        <taxon>Eukaryota</taxon>
        <taxon>Amoebozoa</taxon>
        <taxon>Evosea</taxon>
        <taxon>Eumycetozoa</taxon>
        <taxon>Dictyostelia</taxon>
        <taxon>Dictyosteliales</taxon>
        <taxon>Dictyosteliaceae</taxon>
        <taxon>Dictyostelium</taxon>
    </lineage>
</organism>
<proteinExistence type="predicted"/>
<accession>Q54JH8</accession>
<dbReference type="EMBL" id="AAFI02000107">
    <property type="protein sequence ID" value="EAL63447.1"/>
    <property type="molecule type" value="Genomic_DNA"/>
</dbReference>
<dbReference type="RefSeq" id="XP_636953.1">
    <property type="nucleotide sequence ID" value="XM_631861.1"/>
</dbReference>
<dbReference type="SMR" id="Q54JH8"/>
<dbReference type="FunCoup" id="Q54JH8">
    <property type="interactions" value="877"/>
</dbReference>
<dbReference type="PaxDb" id="44689-DDB0187752"/>
<dbReference type="EnsemblProtists" id="EAL63447">
    <property type="protein sequence ID" value="EAL63447"/>
    <property type="gene ID" value="DDB_G0288043"/>
</dbReference>
<dbReference type="GeneID" id="8626428"/>
<dbReference type="KEGG" id="ddi:DDB_G0288043"/>
<dbReference type="dictyBase" id="DDB_G0288043"/>
<dbReference type="VEuPathDB" id="AmoebaDB:DDB_G0288043"/>
<dbReference type="eggNOG" id="ENOG502RHJ1">
    <property type="taxonomic scope" value="Eukaryota"/>
</dbReference>
<dbReference type="HOGENOM" id="CLU_802728_0_0_1"/>
<dbReference type="InParanoid" id="Q54JH8"/>
<dbReference type="OMA" id="PIRDEIF"/>
<dbReference type="PRO" id="PR:Q54JH8"/>
<dbReference type="Proteomes" id="UP000002195">
    <property type="component" value="Chromosome 5"/>
</dbReference>
<name>Y7752_DICDI</name>